<keyword id="KW-0002">3D-structure</keyword>
<keyword id="KW-0066">ATP synthesis</keyword>
<keyword id="KW-0138">CF(0)</keyword>
<keyword id="KW-0903">Direct protein sequencing</keyword>
<keyword id="KW-0375">Hydrogen ion transport</keyword>
<keyword id="KW-0406">Ion transport</keyword>
<keyword id="KW-0472">Membrane</keyword>
<keyword id="KW-0496">Mitochondrion</keyword>
<keyword id="KW-0999">Mitochondrion inner membrane</keyword>
<keyword id="KW-1185">Reference proteome</keyword>
<keyword id="KW-0812">Transmembrane</keyword>
<keyword id="KW-1133">Transmembrane helix</keyword>
<keyword id="KW-0813">Transport</keyword>
<feature type="propeptide" id="PRO_0000002626" description="Removed in mature form" evidence="2">
    <location>
        <begin position="1"/>
        <end position="10"/>
    </location>
</feature>
<feature type="chain" id="PRO_0000002627" description="ATP synthase subunit a">
    <location>
        <begin position="11"/>
        <end position="259"/>
    </location>
</feature>
<feature type="transmembrane region" description="Helical" evidence="1">
    <location>
        <begin position="36"/>
        <end position="56"/>
    </location>
</feature>
<feature type="transmembrane region" description="Helical" evidence="1">
    <location>
        <begin position="92"/>
        <end position="112"/>
    </location>
</feature>
<feature type="transmembrane region" description="Helical" evidence="1">
    <location>
        <begin position="125"/>
        <end position="145"/>
    </location>
</feature>
<feature type="transmembrane region" description="Helical" evidence="1">
    <location>
        <begin position="150"/>
        <end position="170"/>
    </location>
</feature>
<feature type="transmembrane region" description="Helical" evidence="1">
    <location>
        <begin position="191"/>
        <end position="211"/>
    </location>
</feature>
<feature type="transmembrane region" description="Helical" evidence="1">
    <location>
        <begin position="216"/>
        <end position="236"/>
    </location>
</feature>
<feature type="sequence variant" description="In strain: D273-10B/A1.">
    <original>I</original>
    <variation>M</variation>
    <location>
        <position position="171"/>
    </location>
</feature>
<feature type="sequence variant" description="In strain: D273-10B/A1.">
    <original>F</original>
    <variation>I</variation>
    <location>
        <position position="177"/>
    </location>
</feature>
<feature type="sequence variant" description="In strain: D273-10B/A1.">
    <original>M</original>
    <variation>I</variation>
    <location>
        <position position="231"/>
    </location>
</feature>
<feature type="sequence variant" description="In strain: D273-10B/A1.">
    <original>G</original>
    <variation>S</variation>
    <location>
        <position position="241"/>
    </location>
</feature>
<feature type="sequence variant" description="In strain: D273-10B/A1.">
    <original>A</original>
    <variation>T</variation>
    <location>
        <position position="245"/>
    </location>
</feature>
<feature type="sequence variant" description="In strain: D273-10B/A1.">
    <original>AV</original>
    <variation>TL</variation>
    <location>
        <begin position="255"/>
        <end position="256"/>
    </location>
</feature>
<name>ATP6_YEAST</name>
<sequence>MFNLLNTYITSPLDQFEIRTLFGLQSSFIDLSCLNLTTFSLYTIIVLLVITSLYTLTNNNNKIIGSRWLISQEAIYDTIMNMTKGQIGGKNWGLYFPMIFTLFMFIFIANLISMIPYSFALSAHLVFIISLSIVIWLGNTILGLYKHGWVFFSLFVPAGTPLPLVPLLVIIETLSYFARAISLGLRLGSNILAGHLLMVILAGLTFNFMLINLFTLVFGFVPLAMILAIMMLEFAIGIIQGYVWAILTASYLKDAVYLH</sequence>
<evidence type="ECO:0000255" key="1"/>
<evidence type="ECO:0000269" key="2">
    <source>
    </source>
</evidence>
<evidence type="ECO:0000305" key="3"/>
<accession>P00854</accession>
<accession>A0A0A7P052</accession>
<accession>Q95A27</accession>
<protein>
    <recommendedName>
        <fullName>ATP synthase subunit a</fullName>
    </recommendedName>
    <alternativeName>
        <fullName>F-ATPase protein 6</fullName>
    </alternativeName>
</protein>
<proteinExistence type="evidence at protein level"/>
<gene>
    <name type="primary">ATP6</name>
    <name type="synonym">OLI2</name>
    <name type="synonym">OLI4</name>
    <name type="synonym">PHO1</name>
    <name type="ordered locus">Q0085</name>
</gene>
<comment type="function">
    <text>Mitochondrial membrane ATP synthase (F(1)F(0) ATP synthase or Complex V) produces ATP from ADP in the presence of a proton gradient across the membrane which is generated by electron transport complexes of the respiratory chain. F-type ATPases consist of two structural domains, F(1) - containing the extramembraneous catalytic core and F(0) - containing the membrane proton channel, linked together by a central stalk and a peripheral stalk. During catalysis, ATP synthesis in the catalytic domain of F(1) is coupled via a rotary mechanism of the central stalk subunits to proton translocation. Key component of the proton channel; it may play a direct role in the translocation of protons across the membrane.</text>
</comment>
<comment type="subunit">
    <text>F-type ATPases have 2 components, CF(1) - the catalytic core - and CF(0) - the membrane proton channel. In yeast, the dimeric form of ATP synthase consists of 17 polypeptides: alpha, beta, gamma, delta, epsilon, 4 (B), 5 (OSCP), 6 (A), 8, 9 (C), d, E (Tim11), f, g, h, i/j and k.</text>
</comment>
<comment type="subcellular location">
    <subcellularLocation>
        <location>Mitochondrion inner membrane</location>
        <topology>Multi-pass membrane protein</topology>
    </subcellularLocation>
</comment>
<comment type="similarity">
    <text evidence="3">Belongs to the ATPase A chain family.</text>
</comment>
<dbReference type="EMBL" id="AH001280">
    <property type="protein sequence ID" value="AAA32145.2"/>
    <property type="molecule type" value="Genomic_DNA"/>
</dbReference>
<dbReference type="EMBL" id="V00683">
    <property type="protein sequence ID" value="CAA24054.1"/>
    <property type="molecule type" value="Genomic_DNA"/>
</dbReference>
<dbReference type="EMBL" id="X05056">
    <property type="protein sequence ID" value="CAA28727.1"/>
    <property type="molecule type" value="Genomic_DNA"/>
</dbReference>
<dbReference type="EMBL" id="KP263414">
    <property type="protein sequence ID" value="AIZ98889.1"/>
    <property type="molecule type" value="Genomic_DNA"/>
</dbReference>
<dbReference type="PIR" id="A25869">
    <property type="entry name" value="PWBYJ6"/>
</dbReference>
<dbReference type="RefSeq" id="NP_009313.1">
    <property type="nucleotide sequence ID" value="NC_001224.1"/>
</dbReference>
<dbReference type="PDB" id="6B2Z">
    <property type="method" value="EM"/>
    <property type="resolution" value="3.60 A"/>
    <property type="chains" value="M/a=11-259"/>
</dbReference>
<dbReference type="PDB" id="6B8H">
    <property type="method" value="EM"/>
    <property type="resolution" value="3.60 A"/>
    <property type="chains" value="a/p=11-259"/>
</dbReference>
<dbReference type="PDB" id="6CP3">
    <property type="method" value="EM"/>
    <property type="resolution" value="3.80 A"/>
    <property type="chains" value="X=11-259"/>
</dbReference>
<dbReference type="PDB" id="6CP5">
    <property type="method" value="EM"/>
    <property type="resolution" value="4.20 A"/>
    <property type="chains" value="X=11-259"/>
</dbReference>
<dbReference type="PDB" id="6CP6">
    <property type="method" value="EM"/>
    <property type="resolution" value="3.60 A"/>
    <property type="chains" value="X=11-259"/>
</dbReference>
<dbReference type="PDB" id="6CP7">
    <property type="method" value="EM"/>
    <property type="resolution" value="4.10 A"/>
    <property type="chains" value="X=11-259"/>
</dbReference>
<dbReference type="PDB" id="6WTD">
    <property type="method" value="EM"/>
    <property type="resolution" value="4.20 A"/>
    <property type="chains" value="X=11-259"/>
</dbReference>
<dbReference type="PDB" id="7TJY">
    <property type="method" value="EM"/>
    <property type="resolution" value="3.80 A"/>
    <property type="chains" value="T=11-259"/>
</dbReference>
<dbReference type="PDB" id="7TJZ">
    <property type="method" value="EM"/>
    <property type="resolution" value="4.40 A"/>
    <property type="chains" value="T=11-259"/>
</dbReference>
<dbReference type="PDB" id="7TK0">
    <property type="method" value="EM"/>
    <property type="resolution" value="4.40 A"/>
    <property type="chains" value="T=11-259"/>
</dbReference>
<dbReference type="PDB" id="7TK1">
    <property type="method" value="EM"/>
    <property type="resolution" value="7.10 A"/>
    <property type="chains" value="T=11-259"/>
</dbReference>
<dbReference type="PDB" id="7TK2">
    <property type="method" value="EM"/>
    <property type="resolution" value="6.50 A"/>
    <property type="chains" value="T=11-259"/>
</dbReference>
<dbReference type="PDB" id="7TK3">
    <property type="method" value="EM"/>
    <property type="resolution" value="6.30 A"/>
    <property type="chains" value="T=11-259"/>
</dbReference>
<dbReference type="PDB" id="7TK4">
    <property type="method" value="EM"/>
    <property type="resolution" value="7.00 A"/>
    <property type="chains" value="T=11-259"/>
</dbReference>
<dbReference type="PDB" id="7TK5">
    <property type="method" value="EM"/>
    <property type="resolution" value="7.80 A"/>
    <property type="chains" value="T=11-259"/>
</dbReference>
<dbReference type="PDB" id="7TK6">
    <property type="method" value="EM"/>
    <property type="resolution" value="6.50 A"/>
    <property type="chains" value="T=11-259"/>
</dbReference>
<dbReference type="PDB" id="7TK7">
    <property type="method" value="EM"/>
    <property type="resolution" value="6.70 A"/>
    <property type="chains" value="T=11-259"/>
</dbReference>
<dbReference type="PDB" id="7TK8">
    <property type="method" value="EM"/>
    <property type="resolution" value="4.70 A"/>
    <property type="chains" value="T=11-259"/>
</dbReference>
<dbReference type="PDB" id="7TK9">
    <property type="method" value="EM"/>
    <property type="resolution" value="6.00 A"/>
    <property type="chains" value="T=11-259"/>
</dbReference>
<dbReference type="PDB" id="7TKA">
    <property type="method" value="EM"/>
    <property type="resolution" value="7.10 A"/>
    <property type="chains" value="T=11-259"/>
</dbReference>
<dbReference type="PDB" id="7TKB">
    <property type="method" value="EM"/>
    <property type="resolution" value="6.30 A"/>
    <property type="chains" value="T=11-259"/>
</dbReference>
<dbReference type="PDB" id="7TKC">
    <property type="method" value="EM"/>
    <property type="resolution" value="5.80 A"/>
    <property type="chains" value="T=11-259"/>
</dbReference>
<dbReference type="PDB" id="7TKD">
    <property type="method" value="EM"/>
    <property type="resolution" value="7.70 A"/>
    <property type="chains" value="T=11-259"/>
</dbReference>
<dbReference type="PDB" id="7TKE">
    <property type="method" value="EM"/>
    <property type="resolution" value="7.10 A"/>
    <property type="chains" value="T=11-259"/>
</dbReference>
<dbReference type="PDB" id="7TKF">
    <property type="method" value="EM"/>
    <property type="resolution" value="7.10 A"/>
    <property type="chains" value="T=11-259"/>
</dbReference>
<dbReference type="PDB" id="7TKG">
    <property type="method" value="EM"/>
    <property type="resolution" value="4.50 A"/>
    <property type="chains" value="T=11-259"/>
</dbReference>
<dbReference type="PDB" id="7TKH">
    <property type="method" value="EM"/>
    <property type="resolution" value="4.40 A"/>
    <property type="chains" value="T=11-259"/>
</dbReference>
<dbReference type="PDB" id="7TKI">
    <property type="method" value="EM"/>
    <property type="resolution" value="7.10 A"/>
    <property type="chains" value="T=11-259"/>
</dbReference>
<dbReference type="PDB" id="7TKJ">
    <property type="method" value="EM"/>
    <property type="resolution" value="7.50 A"/>
    <property type="chains" value="T=11-259"/>
</dbReference>
<dbReference type="PDB" id="7TKK">
    <property type="method" value="EM"/>
    <property type="resolution" value="7.30 A"/>
    <property type="chains" value="T=11-259"/>
</dbReference>
<dbReference type="PDB" id="7TKL">
    <property type="method" value="EM"/>
    <property type="resolution" value="6.40 A"/>
    <property type="chains" value="T=11-259"/>
</dbReference>
<dbReference type="PDB" id="7TKM">
    <property type="method" value="EM"/>
    <property type="resolution" value="4.50 A"/>
    <property type="chains" value="T=11-259"/>
</dbReference>
<dbReference type="PDB" id="7TKN">
    <property type="method" value="EM"/>
    <property type="resolution" value="7.10 A"/>
    <property type="chains" value="T=11-259"/>
</dbReference>
<dbReference type="PDB" id="7TKO">
    <property type="method" value="EM"/>
    <property type="resolution" value="4.80 A"/>
    <property type="chains" value="T=11-259"/>
</dbReference>
<dbReference type="PDB" id="7TKP">
    <property type="method" value="EM"/>
    <property type="resolution" value="4.60 A"/>
    <property type="chains" value="T=11-259"/>
</dbReference>
<dbReference type="PDB" id="7TKQ">
    <property type="method" value="EM"/>
    <property type="resolution" value="4.50 A"/>
    <property type="chains" value="T=11-259"/>
</dbReference>
<dbReference type="PDB" id="7TKR">
    <property type="method" value="EM"/>
    <property type="resolution" value="6.50 A"/>
    <property type="chains" value="T=11-259"/>
</dbReference>
<dbReference type="PDB" id="7TKS">
    <property type="method" value="EM"/>
    <property type="resolution" value="7.50 A"/>
    <property type="chains" value="T=11-259"/>
</dbReference>
<dbReference type="PDB" id="8F29">
    <property type="method" value="EM"/>
    <property type="resolution" value="4.00 A"/>
    <property type="chains" value="X=36-259"/>
</dbReference>
<dbReference type="PDB" id="8F39">
    <property type="method" value="EM"/>
    <property type="resolution" value="3.50 A"/>
    <property type="chains" value="X=36-259"/>
</dbReference>
<dbReference type="PDB" id="8FKJ">
    <property type="method" value="EM"/>
    <property type="resolution" value="4.20 A"/>
    <property type="chains" value="X=36-259"/>
</dbReference>
<dbReference type="PDB" id="8FL8">
    <property type="method" value="EM"/>
    <property type="resolution" value="4.20 A"/>
    <property type="chains" value="X=36-259"/>
</dbReference>
<dbReference type="PDBsum" id="6B2Z"/>
<dbReference type="PDBsum" id="6B8H"/>
<dbReference type="PDBsum" id="6CP3"/>
<dbReference type="PDBsum" id="6CP5"/>
<dbReference type="PDBsum" id="6CP6"/>
<dbReference type="PDBsum" id="6CP7"/>
<dbReference type="PDBsum" id="6WTD"/>
<dbReference type="PDBsum" id="7TJY"/>
<dbReference type="PDBsum" id="7TJZ"/>
<dbReference type="PDBsum" id="7TK0"/>
<dbReference type="PDBsum" id="7TK1"/>
<dbReference type="PDBsum" id="7TK2"/>
<dbReference type="PDBsum" id="7TK3"/>
<dbReference type="PDBsum" id="7TK4"/>
<dbReference type="PDBsum" id="7TK5"/>
<dbReference type="PDBsum" id="7TK6"/>
<dbReference type="PDBsum" id="7TK7"/>
<dbReference type="PDBsum" id="7TK8"/>
<dbReference type="PDBsum" id="7TK9"/>
<dbReference type="PDBsum" id="7TKA"/>
<dbReference type="PDBsum" id="7TKB"/>
<dbReference type="PDBsum" id="7TKC"/>
<dbReference type="PDBsum" id="7TKD"/>
<dbReference type="PDBsum" id="7TKE"/>
<dbReference type="PDBsum" id="7TKF"/>
<dbReference type="PDBsum" id="7TKG"/>
<dbReference type="PDBsum" id="7TKH"/>
<dbReference type="PDBsum" id="7TKI"/>
<dbReference type="PDBsum" id="7TKJ"/>
<dbReference type="PDBsum" id="7TKK"/>
<dbReference type="PDBsum" id="7TKL"/>
<dbReference type="PDBsum" id="7TKM"/>
<dbReference type="PDBsum" id="7TKN"/>
<dbReference type="PDBsum" id="7TKO"/>
<dbReference type="PDBsum" id="7TKP"/>
<dbReference type="PDBsum" id="7TKQ"/>
<dbReference type="PDBsum" id="7TKR"/>
<dbReference type="PDBsum" id="7TKS"/>
<dbReference type="PDBsum" id="8F29"/>
<dbReference type="PDBsum" id="8F39"/>
<dbReference type="PDBsum" id="8FKJ"/>
<dbReference type="PDBsum" id="8FL8"/>
<dbReference type="EMDB" id="EMD-21894"/>
<dbReference type="EMDB" id="EMD-25946"/>
<dbReference type="EMDB" id="EMD-25947"/>
<dbReference type="EMDB" id="EMD-25948"/>
<dbReference type="EMDB" id="EMD-25949"/>
<dbReference type="EMDB" id="EMD-25954"/>
<dbReference type="EMDB" id="EMD-25955"/>
<dbReference type="EMDB" id="EMD-25956"/>
<dbReference type="EMDB" id="EMD-25957"/>
<dbReference type="EMDB" id="EMD-25958"/>
<dbReference type="EMDB" id="EMD-25959"/>
<dbReference type="EMDB" id="EMD-25960"/>
<dbReference type="EMDB" id="EMD-25961"/>
<dbReference type="EMDB" id="EMD-25962"/>
<dbReference type="EMDB" id="EMD-25963"/>
<dbReference type="EMDB" id="EMD-25964"/>
<dbReference type="EMDB" id="EMD-25965"/>
<dbReference type="EMDB" id="EMD-25966"/>
<dbReference type="EMDB" id="EMD-25967"/>
<dbReference type="EMDB" id="EMD-25968"/>
<dbReference type="EMDB" id="EMD-25969"/>
<dbReference type="EMDB" id="EMD-25970"/>
<dbReference type="EMDB" id="EMD-25971"/>
<dbReference type="EMDB" id="EMD-25972"/>
<dbReference type="EMDB" id="EMD-25973"/>
<dbReference type="EMDB" id="EMD-25974"/>
<dbReference type="EMDB" id="EMD-25975"/>
<dbReference type="EMDB" id="EMD-25976"/>
<dbReference type="EMDB" id="EMD-25977"/>
<dbReference type="EMDB" id="EMD-25978"/>
<dbReference type="EMDB" id="EMD-25979"/>
<dbReference type="EMDB" id="EMD-25980"/>
<dbReference type="EMDB" id="EMD-28809"/>
<dbReference type="EMDB" id="EMD-28835"/>
<dbReference type="EMDB" id="EMD-29270"/>
<dbReference type="EMDB" id="EMD-7036"/>
<dbReference type="EMDB" id="EMD-7546"/>
<dbReference type="EMDB" id="EMD-7547"/>
<dbReference type="EMDB" id="EMD-7548"/>
<dbReference type="EMDB" id="EMD-7549"/>
<dbReference type="SMR" id="P00854"/>
<dbReference type="BioGRID" id="34793">
    <property type="interactions" value="113"/>
</dbReference>
<dbReference type="ComplexPortal" id="CPX-3281">
    <property type="entry name" value="Mitochondrial proton-transporting ATP synthase complex"/>
</dbReference>
<dbReference type="DIP" id="DIP-3038N"/>
<dbReference type="FunCoup" id="P00854">
    <property type="interactions" value="315"/>
</dbReference>
<dbReference type="IntAct" id="P00854">
    <property type="interactions" value="14"/>
</dbReference>
<dbReference type="STRING" id="4932.Q0085"/>
<dbReference type="TCDB" id="3.A.2.1.3">
    <property type="family name" value="the h+- or na+-translocating f-type, v-type and a-type atpase (f-atpase) superfamily"/>
</dbReference>
<dbReference type="PaxDb" id="4932-Q0085"/>
<dbReference type="PeptideAtlas" id="P00854"/>
<dbReference type="EnsemblFungi" id="Q0085_mRNA">
    <property type="protein sequence ID" value="Q0085"/>
    <property type="gene ID" value="Q0085"/>
</dbReference>
<dbReference type="GeneID" id="854601"/>
<dbReference type="KEGG" id="sce:Q0085"/>
<dbReference type="AGR" id="SGD:S000007268"/>
<dbReference type="SGD" id="S000007268">
    <property type="gene designation" value="ATP6"/>
</dbReference>
<dbReference type="VEuPathDB" id="FungiDB:Q0085"/>
<dbReference type="eggNOG" id="KOG4665">
    <property type="taxonomic scope" value="Eukaryota"/>
</dbReference>
<dbReference type="GeneTree" id="ENSGT00390000005568"/>
<dbReference type="HOGENOM" id="CLU_041018_0_2_1"/>
<dbReference type="InParanoid" id="P00854"/>
<dbReference type="OMA" id="FFDQFMS"/>
<dbReference type="OrthoDB" id="5976622at2759"/>
<dbReference type="BioCyc" id="YEAST:G3O-34379-MONOMER"/>
<dbReference type="Reactome" id="R-SCE-9837999">
    <property type="pathway name" value="Mitochondrial protein degradation"/>
</dbReference>
<dbReference type="PRO" id="PR:P00854"/>
<dbReference type="Proteomes" id="UP000002311">
    <property type="component" value="Mitochondrion"/>
</dbReference>
<dbReference type="RNAct" id="P00854">
    <property type="molecule type" value="protein"/>
</dbReference>
<dbReference type="GO" id="GO:0005743">
    <property type="term" value="C:mitochondrial inner membrane"/>
    <property type="evidence" value="ECO:0000314"/>
    <property type="project" value="ComplexPortal"/>
</dbReference>
<dbReference type="GO" id="GO:0005739">
    <property type="term" value="C:mitochondrion"/>
    <property type="evidence" value="ECO:0007005"/>
    <property type="project" value="SGD"/>
</dbReference>
<dbReference type="GO" id="GO:0045259">
    <property type="term" value="C:proton-transporting ATP synthase complex"/>
    <property type="evidence" value="ECO:0000314"/>
    <property type="project" value="SGD"/>
</dbReference>
<dbReference type="GO" id="GO:0015078">
    <property type="term" value="F:proton transmembrane transporter activity"/>
    <property type="evidence" value="ECO:0007669"/>
    <property type="project" value="InterPro"/>
</dbReference>
<dbReference type="GO" id="GO:0015986">
    <property type="term" value="P:proton motive force-driven ATP synthesis"/>
    <property type="evidence" value="ECO:0000314"/>
    <property type="project" value="ComplexPortal"/>
</dbReference>
<dbReference type="CDD" id="cd00310">
    <property type="entry name" value="ATP-synt_Fo_a_6"/>
    <property type="match status" value="1"/>
</dbReference>
<dbReference type="FunFam" id="1.20.120.220:FF:000003">
    <property type="entry name" value="ATP synthase subunit a"/>
    <property type="match status" value="1"/>
</dbReference>
<dbReference type="Gene3D" id="1.20.120.220">
    <property type="entry name" value="ATP synthase, F0 complex, subunit A"/>
    <property type="match status" value="1"/>
</dbReference>
<dbReference type="HAMAP" id="MF_01393">
    <property type="entry name" value="ATP_synth_a_bact"/>
    <property type="match status" value="1"/>
</dbReference>
<dbReference type="InterPro" id="IPR000568">
    <property type="entry name" value="ATP_synth_F0_asu"/>
</dbReference>
<dbReference type="InterPro" id="IPR023011">
    <property type="entry name" value="ATP_synth_F0_asu_AS"/>
</dbReference>
<dbReference type="InterPro" id="IPR045083">
    <property type="entry name" value="ATP_synth_F0_asu_bact/mt"/>
</dbReference>
<dbReference type="InterPro" id="IPR035908">
    <property type="entry name" value="F0_ATP_A_sf"/>
</dbReference>
<dbReference type="NCBIfam" id="TIGR01131">
    <property type="entry name" value="ATP_synt_6_or_A"/>
    <property type="match status" value="1"/>
</dbReference>
<dbReference type="PANTHER" id="PTHR11410">
    <property type="entry name" value="ATP SYNTHASE SUBUNIT A"/>
    <property type="match status" value="1"/>
</dbReference>
<dbReference type="PANTHER" id="PTHR11410:SF0">
    <property type="entry name" value="ATP SYNTHASE SUBUNIT A"/>
    <property type="match status" value="1"/>
</dbReference>
<dbReference type="Pfam" id="PF00119">
    <property type="entry name" value="ATP-synt_A"/>
    <property type="match status" value="1"/>
</dbReference>
<dbReference type="PRINTS" id="PR00123">
    <property type="entry name" value="ATPASEA"/>
</dbReference>
<dbReference type="SUPFAM" id="SSF81336">
    <property type="entry name" value="F1F0 ATP synthase subunit A"/>
    <property type="match status" value="1"/>
</dbReference>
<dbReference type="PROSITE" id="PS00449">
    <property type="entry name" value="ATPASE_A"/>
    <property type="match status" value="1"/>
</dbReference>
<reference key="1">
    <citation type="journal article" date="1980" name="Cell">
        <title>Assembly of the mitochondrial membrane system: sequence analysis of a yeast mitochondrial ATPase gene containing the oli-2 and oli-4 loci.</title>
        <authorList>
            <person name="Macino G."/>
            <person name="Tzagoloff A."/>
        </authorList>
    </citation>
    <scope>NUCLEOTIDE SEQUENCE [GENOMIC DNA]</scope>
    <source>
        <strain>D273-10B/A1</strain>
    </source>
</reference>
<reference key="2">
    <citation type="journal article" date="1987" name="Nucleic Acids Res.">
        <title>Sequence of the mitochondrial oli2 gene coding for subunit 6 of the mitochondrial ATPase complex in different strains of Saccharomyces.</title>
        <authorList>
            <person name="John U.P."/>
            <person name="Nagley P."/>
        </authorList>
    </citation>
    <scope>NUCLEOTIDE SEQUENCE [GENOMIC DNA]</scope>
    <source>
        <strain>JM6</strain>
    </source>
</reference>
<reference key="3">
    <citation type="journal article" date="1998" name="FEBS Lett.">
        <title>The complete sequence of the mitochondrial genome of Saccharomyces cerevisiae.</title>
        <authorList>
            <person name="Foury F."/>
            <person name="Roganti T."/>
            <person name="Lecrenier N."/>
            <person name="Purnelle B."/>
        </authorList>
    </citation>
    <scope>NUCLEOTIDE SEQUENCE [LARGE SCALE GENOMIC DNA]</scope>
    <source>
        <strain>ATCC 96604 / S288c / FY1679</strain>
    </source>
</reference>
<reference key="4">
    <citation type="journal article" date="2014" name="G3 (Bethesda)">
        <title>The reference genome sequence of Saccharomyces cerevisiae: Then and now.</title>
        <authorList>
            <person name="Engel S.R."/>
            <person name="Dietrich F.S."/>
            <person name="Fisk D.G."/>
            <person name="Binkley G."/>
            <person name="Balakrishnan R."/>
            <person name="Costanzo M.C."/>
            <person name="Dwight S.S."/>
            <person name="Hitz B.C."/>
            <person name="Karra K."/>
            <person name="Nash R.S."/>
            <person name="Weng S."/>
            <person name="Wong E.D."/>
            <person name="Lloyd P."/>
            <person name="Skrzypek M.S."/>
            <person name="Miyasato S.R."/>
            <person name="Simison M."/>
            <person name="Cherry J.M."/>
        </authorList>
    </citation>
    <scope>GENOME REANNOTATION</scope>
    <source>
        <strain>ATCC 96604 / S288c / FY1679</strain>
    </source>
</reference>
<reference key="5">
    <citation type="journal article" date="1988" name="Eur. J. Biochem.">
        <title>NH2-terminal sequence of the isolated yeast ATP synthase subunit 6 reveals post-translational cleavage.</title>
        <authorList>
            <person name="Michon T."/>
            <person name="Galante M."/>
            <person name="Velours J."/>
        </authorList>
    </citation>
    <scope>PROTEIN SEQUENCE OF 11-32</scope>
</reference>
<organism>
    <name type="scientific">Saccharomyces cerevisiae (strain ATCC 204508 / S288c)</name>
    <name type="common">Baker's yeast</name>
    <dbReference type="NCBI Taxonomy" id="559292"/>
    <lineage>
        <taxon>Eukaryota</taxon>
        <taxon>Fungi</taxon>
        <taxon>Dikarya</taxon>
        <taxon>Ascomycota</taxon>
        <taxon>Saccharomycotina</taxon>
        <taxon>Saccharomycetes</taxon>
        <taxon>Saccharomycetales</taxon>
        <taxon>Saccharomycetaceae</taxon>
        <taxon>Saccharomyces</taxon>
    </lineage>
</organism>
<geneLocation type="mitochondrion"/>